<organism>
    <name type="scientific">Schizosaccharomyces pombe (strain 972 / ATCC 24843)</name>
    <name type="common">Fission yeast</name>
    <dbReference type="NCBI Taxonomy" id="284812"/>
    <lineage>
        <taxon>Eukaryota</taxon>
        <taxon>Fungi</taxon>
        <taxon>Dikarya</taxon>
        <taxon>Ascomycota</taxon>
        <taxon>Taphrinomycotina</taxon>
        <taxon>Schizosaccharomycetes</taxon>
        <taxon>Schizosaccharomycetales</taxon>
        <taxon>Schizosaccharomycetaceae</taxon>
        <taxon>Schizosaccharomyces</taxon>
    </lineage>
</organism>
<comment type="subcellular location">
    <subcellularLocation>
        <location evidence="3">Endoplasmic reticulum</location>
    </subcellularLocation>
    <subcellularLocation>
        <location evidence="3">Golgi apparatus</location>
    </subcellularLocation>
    <subcellularLocation>
        <location evidence="1">Membrane</location>
        <topology evidence="1">Multi-pass membrane protein</topology>
    </subcellularLocation>
</comment>
<comment type="similarity">
    <text evidence="1">Belongs to the major facilitator superfamily. CAR1 family.</text>
</comment>
<evidence type="ECO:0000255" key="1"/>
<evidence type="ECO:0000256" key="2">
    <source>
        <dbReference type="SAM" id="MobiDB-lite"/>
    </source>
</evidence>
<evidence type="ECO:0000269" key="3">
    <source>
    </source>
</evidence>
<evidence type="ECO:0000305" key="4"/>
<evidence type="ECO:0000312" key="5">
    <source>
        <dbReference type="EMBL" id="CAB42066.1"/>
    </source>
</evidence>
<dbReference type="EMBL" id="CU329672">
    <property type="protein sequence ID" value="CAB42066.1"/>
    <property type="molecule type" value="Genomic_DNA"/>
</dbReference>
<dbReference type="PIR" id="T41407">
    <property type="entry name" value="T41407"/>
</dbReference>
<dbReference type="RefSeq" id="NP_588568.1">
    <property type="nucleotide sequence ID" value="NM_001023555.2"/>
</dbReference>
<dbReference type="SMR" id="Q9Y7S4"/>
<dbReference type="BioGRID" id="276112">
    <property type="interactions" value="2"/>
</dbReference>
<dbReference type="FunCoup" id="Q9Y7S4">
    <property type="interactions" value="129"/>
</dbReference>
<dbReference type="STRING" id="284812.Q9Y7S4"/>
<dbReference type="PaxDb" id="4896-SPCC569.05c.1"/>
<dbReference type="EnsemblFungi" id="SPCC569.05c.1">
    <property type="protein sequence ID" value="SPCC569.05c.1:pep"/>
    <property type="gene ID" value="SPCC569.05c"/>
</dbReference>
<dbReference type="KEGG" id="spo:2539551"/>
<dbReference type="PomBase" id="SPCC569.05c"/>
<dbReference type="VEuPathDB" id="FungiDB:SPCC569.05c"/>
<dbReference type="eggNOG" id="KOG0255">
    <property type="taxonomic scope" value="Eukaryota"/>
</dbReference>
<dbReference type="HOGENOM" id="CLU_008455_11_4_1"/>
<dbReference type="InParanoid" id="Q9Y7S4"/>
<dbReference type="OMA" id="IPAFMGY"/>
<dbReference type="PhylomeDB" id="Q9Y7S4"/>
<dbReference type="PRO" id="PR:Q9Y7S4"/>
<dbReference type="Proteomes" id="UP000002485">
    <property type="component" value="Chromosome III"/>
</dbReference>
<dbReference type="GO" id="GO:0005783">
    <property type="term" value="C:endoplasmic reticulum"/>
    <property type="evidence" value="ECO:0007005"/>
    <property type="project" value="PomBase"/>
</dbReference>
<dbReference type="GO" id="GO:0005794">
    <property type="term" value="C:Golgi apparatus"/>
    <property type="evidence" value="ECO:0007005"/>
    <property type="project" value="PomBase"/>
</dbReference>
<dbReference type="GO" id="GO:0005886">
    <property type="term" value="C:plasma membrane"/>
    <property type="evidence" value="ECO:0000266"/>
    <property type="project" value="PomBase"/>
</dbReference>
<dbReference type="GO" id="GO:0015606">
    <property type="term" value="F:spermidine transmembrane transporter activity"/>
    <property type="evidence" value="ECO:0000266"/>
    <property type="project" value="PomBase"/>
</dbReference>
<dbReference type="GO" id="GO:0000297">
    <property type="term" value="F:spermine transmembrane transporter activity"/>
    <property type="evidence" value="ECO:0000266"/>
    <property type="project" value="PomBase"/>
</dbReference>
<dbReference type="GO" id="GO:0022857">
    <property type="term" value="F:transmembrane transporter activity"/>
    <property type="evidence" value="ECO:0000318"/>
    <property type="project" value="GO_Central"/>
</dbReference>
<dbReference type="GO" id="GO:1903711">
    <property type="term" value="P:spermidine transmembrane transport"/>
    <property type="evidence" value="ECO:0000305"/>
    <property type="project" value="PomBase"/>
</dbReference>
<dbReference type="GO" id="GO:1903710">
    <property type="term" value="P:spermine transmembrane transport"/>
    <property type="evidence" value="ECO:0000305"/>
    <property type="project" value="PomBase"/>
</dbReference>
<dbReference type="GO" id="GO:0055085">
    <property type="term" value="P:transmembrane transport"/>
    <property type="evidence" value="ECO:0000318"/>
    <property type="project" value="GO_Central"/>
</dbReference>
<dbReference type="CDD" id="cd17323">
    <property type="entry name" value="MFS_Tpo1_MDR_like"/>
    <property type="match status" value="1"/>
</dbReference>
<dbReference type="FunFam" id="1.20.1250.20:FF:000011">
    <property type="entry name" value="MFS multidrug transporter, putative"/>
    <property type="match status" value="1"/>
</dbReference>
<dbReference type="Gene3D" id="1.20.1250.20">
    <property type="entry name" value="MFS general substrate transporter like domains"/>
    <property type="match status" value="1"/>
</dbReference>
<dbReference type="InterPro" id="IPR011701">
    <property type="entry name" value="MFS"/>
</dbReference>
<dbReference type="InterPro" id="IPR020846">
    <property type="entry name" value="MFS_dom"/>
</dbReference>
<dbReference type="InterPro" id="IPR036259">
    <property type="entry name" value="MFS_trans_sf"/>
</dbReference>
<dbReference type="PANTHER" id="PTHR23502">
    <property type="entry name" value="MAJOR FACILITATOR SUPERFAMILY"/>
    <property type="match status" value="1"/>
</dbReference>
<dbReference type="PANTHER" id="PTHR23502:SF31">
    <property type="entry name" value="POLYAMINE TRANSPORTER 1"/>
    <property type="match status" value="1"/>
</dbReference>
<dbReference type="Pfam" id="PF07690">
    <property type="entry name" value="MFS_1"/>
    <property type="match status" value="1"/>
</dbReference>
<dbReference type="SUPFAM" id="SSF103473">
    <property type="entry name" value="MFS general substrate transporter"/>
    <property type="match status" value="1"/>
</dbReference>
<dbReference type="PROSITE" id="PS50850">
    <property type="entry name" value="MFS"/>
    <property type="match status" value="1"/>
</dbReference>
<gene>
    <name type="ORF">SPCC569.05c</name>
</gene>
<feature type="chain" id="PRO_0000372794" description="Uncharacterized transporter C569.05c">
    <location>
        <begin position="1"/>
        <end position="576"/>
    </location>
</feature>
<feature type="transmembrane region" description="Helical" evidence="1">
    <location>
        <begin position="149"/>
        <end position="169"/>
    </location>
</feature>
<feature type="transmembrane region" description="Helical" evidence="1">
    <location>
        <begin position="173"/>
        <end position="193"/>
    </location>
</feature>
<feature type="transmembrane region" description="Helical" evidence="1">
    <location>
        <begin position="200"/>
        <end position="220"/>
    </location>
</feature>
<feature type="transmembrane region" description="Helical" evidence="1">
    <location>
        <begin position="231"/>
        <end position="251"/>
    </location>
</feature>
<feature type="transmembrane region" description="Helical" evidence="1">
    <location>
        <begin position="261"/>
        <end position="281"/>
    </location>
</feature>
<feature type="transmembrane region" description="Helical" evidence="1">
    <location>
        <begin position="291"/>
        <end position="311"/>
    </location>
</feature>
<feature type="transmembrane region" description="Helical" evidence="1">
    <location>
        <begin position="366"/>
        <end position="386"/>
    </location>
</feature>
<feature type="transmembrane region" description="Helical" evidence="1">
    <location>
        <begin position="401"/>
        <end position="421"/>
    </location>
</feature>
<feature type="transmembrane region" description="Helical" evidence="1">
    <location>
        <begin position="446"/>
        <end position="466"/>
    </location>
</feature>
<feature type="transmembrane region" description="Helical" evidence="1">
    <location>
        <begin position="472"/>
        <end position="492"/>
    </location>
</feature>
<feature type="transmembrane region" description="Helical" evidence="1">
    <location>
        <begin position="503"/>
        <end position="525"/>
    </location>
</feature>
<feature type="transmembrane region" description="Helical" evidence="1">
    <location>
        <begin position="542"/>
        <end position="562"/>
    </location>
</feature>
<feature type="region of interest" description="Disordered" evidence="2">
    <location>
        <begin position="1"/>
        <end position="40"/>
    </location>
</feature>
<feature type="compositionally biased region" description="Polar residues" evidence="2">
    <location>
        <begin position="1"/>
        <end position="21"/>
    </location>
</feature>
<feature type="compositionally biased region" description="Polar residues" evidence="2">
    <location>
        <begin position="28"/>
        <end position="40"/>
    </location>
</feature>
<keyword id="KW-0256">Endoplasmic reticulum</keyword>
<keyword id="KW-0333">Golgi apparatus</keyword>
<keyword id="KW-0472">Membrane</keyword>
<keyword id="KW-1185">Reference proteome</keyword>
<keyword id="KW-0812">Transmembrane</keyword>
<keyword id="KW-1133">Transmembrane helix</keyword>
<keyword id="KW-0813">Transport</keyword>
<name>YQO5_SCHPO</name>
<accession>Q9Y7S4</accession>
<protein>
    <recommendedName>
        <fullName>Uncharacterized transporter C569.05c</fullName>
    </recommendedName>
</protein>
<reference evidence="5" key="1">
    <citation type="journal article" date="2002" name="Nature">
        <title>The genome sequence of Schizosaccharomyces pombe.</title>
        <authorList>
            <person name="Wood V."/>
            <person name="Gwilliam R."/>
            <person name="Rajandream M.A."/>
            <person name="Lyne M.H."/>
            <person name="Lyne R."/>
            <person name="Stewart A."/>
            <person name="Sgouros J.G."/>
            <person name="Peat N."/>
            <person name="Hayles J."/>
            <person name="Baker S.G."/>
            <person name="Basham D."/>
            <person name="Bowman S."/>
            <person name="Brooks K."/>
            <person name="Brown D."/>
            <person name="Brown S."/>
            <person name="Chillingworth T."/>
            <person name="Churcher C.M."/>
            <person name="Collins M."/>
            <person name="Connor R."/>
            <person name="Cronin A."/>
            <person name="Davis P."/>
            <person name="Feltwell T."/>
            <person name="Fraser A."/>
            <person name="Gentles S."/>
            <person name="Goble A."/>
            <person name="Hamlin N."/>
            <person name="Harris D.E."/>
            <person name="Hidalgo J."/>
            <person name="Hodgson G."/>
            <person name="Holroyd S."/>
            <person name="Hornsby T."/>
            <person name="Howarth S."/>
            <person name="Huckle E.J."/>
            <person name="Hunt S."/>
            <person name="Jagels K."/>
            <person name="James K.D."/>
            <person name="Jones L."/>
            <person name="Jones M."/>
            <person name="Leather S."/>
            <person name="McDonald S."/>
            <person name="McLean J."/>
            <person name="Mooney P."/>
            <person name="Moule S."/>
            <person name="Mungall K.L."/>
            <person name="Murphy L.D."/>
            <person name="Niblett D."/>
            <person name="Odell C."/>
            <person name="Oliver K."/>
            <person name="O'Neil S."/>
            <person name="Pearson D."/>
            <person name="Quail M.A."/>
            <person name="Rabbinowitsch E."/>
            <person name="Rutherford K.M."/>
            <person name="Rutter S."/>
            <person name="Saunders D."/>
            <person name="Seeger K."/>
            <person name="Sharp S."/>
            <person name="Skelton J."/>
            <person name="Simmonds M.N."/>
            <person name="Squares R."/>
            <person name="Squares S."/>
            <person name="Stevens K."/>
            <person name="Taylor K."/>
            <person name="Taylor R.G."/>
            <person name="Tivey A."/>
            <person name="Walsh S.V."/>
            <person name="Warren T."/>
            <person name="Whitehead S."/>
            <person name="Woodward J.R."/>
            <person name="Volckaert G."/>
            <person name="Aert R."/>
            <person name="Robben J."/>
            <person name="Grymonprez B."/>
            <person name="Weltjens I."/>
            <person name="Vanstreels E."/>
            <person name="Rieger M."/>
            <person name="Schaefer M."/>
            <person name="Mueller-Auer S."/>
            <person name="Gabel C."/>
            <person name="Fuchs M."/>
            <person name="Duesterhoeft A."/>
            <person name="Fritzc C."/>
            <person name="Holzer E."/>
            <person name="Moestl D."/>
            <person name="Hilbert H."/>
            <person name="Borzym K."/>
            <person name="Langer I."/>
            <person name="Beck A."/>
            <person name="Lehrach H."/>
            <person name="Reinhardt R."/>
            <person name="Pohl T.M."/>
            <person name="Eger P."/>
            <person name="Zimmermann W."/>
            <person name="Wedler H."/>
            <person name="Wambutt R."/>
            <person name="Purnelle B."/>
            <person name="Goffeau A."/>
            <person name="Cadieu E."/>
            <person name="Dreano S."/>
            <person name="Gloux S."/>
            <person name="Lelaure V."/>
            <person name="Mottier S."/>
            <person name="Galibert F."/>
            <person name="Aves S.J."/>
            <person name="Xiang Z."/>
            <person name="Hunt C."/>
            <person name="Moore K."/>
            <person name="Hurst S.M."/>
            <person name="Lucas M."/>
            <person name="Rochet M."/>
            <person name="Gaillardin C."/>
            <person name="Tallada V.A."/>
            <person name="Garzon A."/>
            <person name="Thode G."/>
            <person name="Daga R.R."/>
            <person name="Cruzado L."/>
            <person name="Jimenez J."/>
            <person name="Sanchez M."/>
            <person name="del Rey F."/>
            <person name="Benito J."/>
            <person name="Dominguez A."/>
            <person name="Revuelta J.L."/>
            <person name="Moreno S."/>
            <person name="Armstrong J."/>
            <person name="Forsburg S.L."/>
            <person name="Cerutti L."/>
            <person name="Lowe T."/>
            <person name="McCombie W.R."/>
            <person name="Paulsen I."/>
            <person name="Potashkin J."/>
            <person name="Shpakovski G.V."/>
            <person name="Ussery D."/>
            <person name="Barrell B.G."/>
            <person name="Nurse P."/>
        </authorList>
    </citation>
    <scope>NUCLEOTIDE SEQUENCE [LARGE SCALE GENOMIC DNA]</scope>
    <source>
        <strain>972 / ATCC 24843</strain>
    </source>
</reference>
<reference evidence="4" key="2">
    <citation type="journal article" date="2006" name="Nat. Biotechnol.">
        <title>ORFeome cloning and global analysis of protein localization in the fission yeast Schizosaccharomyces pombe.</title>
        <authorList>
            <person name="Matsuyama A."/>
            <person name="Arai R."/>
            <person name="Yashiroda Y."/>
            <person name="Shirai A."/>
            <person name="Kamata A."/>
            <person name="Sekido S."/>
            <person name="Kobayashi Y."/>
            <person name="Hashimoto A."/>
            <person name="Hamamoto M."/>
            <person name="Hiraoka Y."/>
            <person name="Horinouchi S."/>
            <person name="Yoshida M."/>
        </authorList>
    </citation>
    <scope>SUBCELLULAR LOCATION [LARGE SCALE ANALYSIS]</scope>
</reference>
<proteinExistence type="inferred from homology"/>
<sequence>MSTNPNAGIQPLTNSISQSASAHPELYHTTSHESVSTYQLQSQLSHSATSNLSTAANFHTRPPIANDENAQNLSTVNSSHSSELSKANLVDVEKCIQDPLLQIFPTVEDPDRFVFSIDPKSPLIAVNWPFRKKLKITCVYSYVALCSTFASSVFSVPAEAITTIFHISLTVSLLTMTVFLCGYIAGPIVWAPLSELSGRKLPLLIGMFGFGIFNISVAVAKDIQTIMMCRFFSGFFASAPLTVVAAAFADMYSNKHRGTAITIFAALVFDGPLVSPIIGGFLTKSYLGWRWTEYITSFMGFFALVIVYLFCDETYSKAIIRNKAKEYRAMSGNYFVHAKSEEEVLTVPDVAKNYLLVPMKLLFTEPIVFLITLYSSFVYAILYLLLEAYPIIFSEKRHFSMGVAELPYIGLLVGVFIGSAINISFEPWYYRRCLALGGKPDPEARLPPMMIGCFMFPAGIFWLSWSGYYSYVHWIVPTLSGLATGCGILLIFLQCLNYLIDAYLFRAASAVAANTIMRSAMAAGFPLFAVQMFHNMGVGWAGSLLGFIAVALIPMPFAFFFFGRKIREKSKMAVVL</sequence>